<accession>A1C4N6</accession>
<name>RS3A_ASPCL</name>
<keyword id="KW-0007">Acetylation</keyword>
<keyword id="KW-0963">Cytoplasm</keyword>
<keyword id="KW-1185">Reference proteome</keyword>
<keyword id="KW-0687">Ribonucleoprotein</keyword>
<keyword id="KW-0689">Ribosomal protein</keyword>
<sequence length="256" mass="29208">MAVGKNKRLSKGKKGVKKRTVDPFTRKDEYSVKAPSTFQIRDVGKTLVNRTSGLKNANDSLKGRIFEVSLADLQNDEDHAFRKVKLRVDEIQGKNCLTNFHGLDFTTDKLRSLVRKWQSLIEANVTVKTTDDYLLRLFAIAFTKRRPNQIKKTTYARSSQIRAIRKKMTEIMQREAASCSLAQLTHKLIPEVIGREIEKATQGIYPLQNVHIRKVKLLKAPKFDLGALLNLHGESTTDDKGQKVEREFKEQVLESV</sequence>
<feature type="initiator methionine" description="Removed" evidence="1">
    <location>
        <position position="1"/>
    </location>
</feature>
<feature type="chain" id="PRO_0000389356" description="Small ribosomal subunit protein eS1">
    <location>
        <begin position="2"/>
        <end position="256"/>
    </location>
</feature>
<feature type="region of interest" description="Disordered" evidence="2">
    <location>
        <begin position="1"/>
        <end position="20"/>
    </location>
</feature>
<feature type="compositionally biased region" description="Basic residues" evidence="2">
    <location>
        <begin position="1"/>
        <end position="18"/>
    </location>
</feature>
<feature type="modified residue" description="N-acetylalanine; partial" evidence="1">
    <location>
        <position position="2"/>
    </location>
</feature>
<comment type="subunit">
    <text evidence="1">Component of the small ribosomal subunit. Mature ribosomes consist of a small (40S) and a large (60S) subunit. The 40S subunit contains about 33 different proteins and 1 molecule of RNA (18S). The 60S subunit contains about 49 different proteins and 3 molecules of RNA (25S, 5.8S and 5S).</text>
</comment>
<comment type="subcellular location">
    <subcellularLocation>
        <location evidence="1">Cytoplasm</location>
    </subcellularLocation>
</comment>
<comment type="similarity">
    <text evidence="1">Belongs to the eukaryotic ribosomal protein eS1 family.</text>
</comment>
<protein>
    <recommendedName>
        <fullName evidence="1">Small ribosomal subunit protein eS1</fullName>
    </recommendedName>
    <alternativeName>
        <fullName evidence="3">40S ribosomal protein S1</fullName>
    </alternativeName>
</protein>
<reference key="1">
    <citation type="journal article" date="2008" name="PLoS Genet.">
        <title>Genomic islands in the pathogenic filamentous fungus Aspergillus fumigatus.</title>
        <authorList>
            <person name="Fedorova N.D."/>
            <person name="Khaldi N."/>
            <person name="Joardar V.S."/>
            <person name="Maiti R."/>
            <person name="Amedeo P."/>
            <person name="Anderson M.J."/>
            <person name="Crabtree J."/>
            <person name="Silva J.C."/>
            <person name="Badger J.H."/>
            <person name="Albarraq A."/>
            <person name="Angiuoli S."/>
            <person name="Bussey H."/>
            <person name="Bowyer P."/>
            <person name="Cotty P.J."/>
            <person name="Dyer P.S."/>
            <person name="Egan A."/>
            <person name="Galens K."/>
            <person name="Fraser-Liggett C.M."/>
            <person name="Haas B.J."/>
            <person name="Inman J.M."/>
            <person name="Kent R."/>
            <person name="Lemieux S."/>
            <person name="Malavazi I."/>
            <person name="Orvis J."/>
            <person name="Roemer T."/>
            <person name="Ronning C.M."/>
            <person name="Sundaram J.P."/>
            <person name="Sutton G."/>
            <person name="Turner G."/>
            <person name="Venter J.C."/>
            <person name="White O.R."/>
            <person name="Whitty B.R."/>
            <person name="Youngman P."/>
            <person name="Wolfe K.H."/>
            <person name="Goldman G.H."/>
            <person name="Wortman J.R."/>
            <person name="Jiang B."/>
            <person name="Denning D.W."/>
            <person name="Nierman W.C."/>
        </authorList>
    </citation>
    <scope>NUCLEOTIDE SEQUENCE [LARGE SCALE GENOMIC DNA]</scope>
    <source>
        <strain>ATCC 1007 / CBS 513.65 / DSM 816 / NCTC 3887 / NRRL 1 / QM 1276 / 107</strain>
    </source>
</reference>
<gene>
    <name type="primary">rps1</name>
    <name type="ORF">ACLA_000650</name>
</gene>
<organism>
    <name type="scientific">Aspergillus clavatus (strain ATCC 1007 / CBS 513.65 / DSM 816 / NCTC 3887 / NRRL 1 / QM 1276 / 107)</name>
    <dbReference type="NCBI Taxonomy" id="344612"/>
    <lineage>
        <taxon>Eukaryota</taxon>
        <taxon>Fungi</taxon>
        <taxon>Dikarya</taxon>
        <taxon>Ascomycota</taxon>
        <taxon>Pezizomycotina</taxon>
        <taxon>Eurotiomycetes</taxon>
        <taxon>Eurotiomycetidae</taxon>
        <taxon>Eurotiales</taxon>
        <taxon>Aspergillaceae</taxon>
        <taxon>Aspergillus</taxon>
        <taxon>Aspergillus subgen. Fumigati</taxon>
    </lineage>
</organism>
<evidence type="ECO:0000255" key="1">
    <source>
        <dbReference type="HAMAP-Rule" id="MF_03122"/>
    </source>
</evidence>
<evidence type="ECO:0000256" key="2">
    <source>
        <dbReference type="SAM" id="MobiDB-lite"/>
    </source>
</evidence>
<evidence type="ECO:0000305" key="3"/>
<dbReference type="EMBL" id="DS027004">
    <property type="protein sequence ID" value="EAW14654.1"/>
    <property type="molecule type" value="Genomic_DNA"/>
</dbReference>
<dbReference type="RefSeq" id="XP_001276080.1">
    <property type="nucleotide sequence ID" value="XM_001276079.1"/>
</dbReference>
<dbReference type="SMR" id="A1C4N6"/>
<dbReference type="STRING" id="344612.A1C4N6"/>
<dbReference type="EnsemblFungi" id="EAW14654">
    <property type="protein sequence ID" value="EAW14654"/>
    <property type="gene ID" value="ACLA_000650"/>
</dbReference>
<dbReference type="GeneID" id="4708710"/>
<dbReference type="KEGG" id="act:ACLA_000650"/>
<dbReference type="VEuPathDB" id="FungiDB:ACLA_000650"/>
<dbReference type="eggNOG" id="KOG1628">
    <property type="taxonomic scope" value="Eukaryota"/>
</dbReference>
<dbReference type="HOGENOM" id="CLU_062507_0_0_1"/>
<dbReference type="OMA" id="TRFKGHE"/>
<dbReference type="OrthoDB" id="9834376at2759"/>
<dbReference type="Proteomes" id="UP000006701">
    <property type="component" value="Unassembled WGS sequence"/>
</dbReference>
<dbReference type="GO" id="GO:0022627">
    <property type="term" value="C:cytosolic small ribosomal subunit"/>
    <property type="evidence" value="ECO:0007669"/>
    <property type="project" value="UniProtKB-UniRule"/>
</dbReference>
<dbReference type="GO" id="GO:0003735">
    <property type="term" value="F:structural constituent of ribosome"/>
    <property type="evidence" value="ECO:0007669"/>
    <property type="project" value="UniProtKB-UniRule"/>
</dbReference>
<dbReference type="GO" id="GO:0006412">
    <property type="term" value="P:translation"/>
    <property type="evidence" value="ECO:0007669"/>
    <property type="project" value="UniProtKB-UniRule"/>
</dbReference>
<dbReference type="HAMAP" id="MF_03122">
    <property type="entry name" value="Ribosomal_eS1_euk"/>
    <property type="match status" value="1"/>
</dbReference>
<dbReference type="InterPro" id="IPR001593">
    <property type="entry name" value="Ribosomal_eS1"/>
</dbReference>
<dbReference type="InterPro" id="IPR018281">
    <property type="entry name" value="Ribosomal_eS1_CS"/>
</dbReference>
<dbReference type="InterPro" id="IPR027500">
    <property type="entry name" value="Ribosomal_eS1_euk"/>
</dbReference>
<dbReference type="PANTHER" id="PTHR11830">
    <property type="entry name" value="40S RIBOSOMAL PROTEIN S3A"/>
    <property type="match status" value="1"/>
</dbReference>
<dbReference type="Pfam" id="PF01015">
    <property type="entry name" value="Ribosomal_S3Ae"/>
    <property type="match status" value="1"/>
</dbReference>
<dbReference type="SMART" id="SM01397">
    <property type="entry name" value="Ribosomal_S3Ae"/>
    <property type="match status" value="1"/>
</dbReference>
<dbReference type="PROSITE" id="PS01191">
    <property type="entry name" value="RIBOSOMAL_S3AE"/>
    <property type="match status" value="1"/>
</dbReference>
<proteinExistence type="inferred from homology"/>